<dbReference type="EMBL" id="CP000024">
    <property type="protein sequence ID" value="AAV63307.1"/>
    <property type="molecule type" value="Genomic_DNA"/>
</dbReference>
<dbReference type="RefSeq" id="WP_011226575.1">
    <property type="nucleotide sequence ID" value="NC_006449.1"/>
</dbReference>
<dbReference type="SMR" id="Q5LY20"/>
<dbReference type="GeneID" id="66899520"/>
<dbReference type="KEGG" id="stc:str1790"/>
<dbReference type="HOGENOM" id="CLU_072226_1_1_9"/>
<dbReference type="GO" id="GO:0015935">
    <property type="term" value="C:small ribosomal subunit"/>
    <property type="evidence" value="ECO:0007669"/>
    <property type="project" value="InterPro"/>
</dbReference>
<dbReference type="GO" id="GO:0019843">
    <property type="term" value="F:rRNA binding"/>
    <property type="evidence" value="ECO:0007669"/>
    <property type="project" value="UniProtKB-UniRule"/>
</dbReference>
<dbReference type="GO" id="GO:0003735">
    <property type="term" value="F:structural constituent of ribosome"/>
    <property type="evidence" value="ECO:0007669"/>
    <property type="project" value="InterPro"/>
</dbReference>
<dbReference type="GO" id="GO:0000049">
    <property type="term" value="F:tRNA binding"/>
    <property type="evidence" value="ECO:0007669"/>
    <property type="project" value="UniProtKB-UniRule"/>
</dbReference>
<dbReference type="GO" id="GO:0006412">
    <property type="term" value="P:translation"/>
    <property type="evidence" value="ECO:0007669"/>
    <property type="project" value="UniProtKB-UniRule"/>
</dbReference>
<dbReference type="CDD" id="cd14869">
    <property type="entry name" value="uS7_Bacteria"/>
    <property type="match status" value="1"/>
</dbReference>
<dbReference type="FunFam" id="1.10.455.10:FF:000001">
    <property type="entry name" value="30S ribosomal protein S7"/>
    <property type="match status" value="1"/>
</dbReference>
<dbReference type="Gene3D" id="1.10.455.10">
    <property type="entry name" value="Ribosomal protein S7 domain"/>
    <property type="match status" value="1"/>
</dbReference>
<dbReference type="HAMAP" id="MF_00480_B">
    <property type="entry name" value="Ribosomal_uS7_B"/>
    <property type="match status" value="1"/>
</dbReference>
<dbReference type="InterPro" id="IPR000235">
    <property type="entry name" value="Ribosomal_uS7"/>
</dbReference>
<dbReference type="InterPro" id="IPR005717">
    <property type="entry name" value="Ribosomal_uS7_bac/org-type"/>
</dbReference>
<dbReference type="InterPro" id="IPR020606">
    <property type="entry name" value="Ribosomal_uS7_CS"/>
</dbReference>
<dbReference type="InterPro" id="IPR023798">
    <property type="entry name" value="Ribosomal_uS7_dom"/>
</dbReference>
<dbReference type="InterPro" id="IPR036823">
    <property type="entry name" value="Ribosomal_uS7_dom_sf"/>
</dbReference>
<dbReference type="NCBIfam" id="TIGR01029">
    <property type="entry name" value="rpsG_bact"/>
    <property type="match status" value="1"/>
</dbReference>
<dbReference type="PANTHER" id="PTHR11205">
    <property type="entry name" value="RIBOSOMAL PROTEIN S7"/>
    <property type="match status" value="1"/>
</dbReference>
<dbReference type="Pfam" id="PF00177">
    <property type="entry name" value="Ribosomal_S7"/>
    <property type="match status" value="1"/>
</dbReference>
<dbReference type="PIRSF" id="PIRSF002122">
    <property type="entry name" value="RPS7p_RPS7a_RPS5e_RPS7o"/>
    <property type="match status" value="1"/>
</dbReference>
<dbReference type="SUPFAM" id="SSF47973">
    <property type="entry name" value="Ribosomal protein S7"/>
    <property type="match status" value="1"/>
</dbReference>
<dbReference type="PROSITE" id="PS00052">
    <property type="entry name" value="RIBOSOMAL_S7"/>
    <property type="match status" value="1"/>
</dbReference>
<evidence type="ECO:0000255" key="1">
    <source>
        <dbReference type="HAMAP-Rule" id="MF_00480"/>
    </source>
</evidence>
<evidence type="ECO:0000305" key="2"/>
<protein>
    <recommendedName>
        <fullName evidence="1">Small ribosomal subunit protein uS7</fullName>
    </recommendedName>
    <alternativeName>
        <fullName evidence="2">30S ribosomal protein S7</fullName>
    </alternativeName>
</protein>
<gene>
    <name evidence="1" type="primary">rpsG</name>
    <name type="ordered locus">str1790</name>
</gene>
<reference key="1">
    <citation type="journal article" date="2004" name="Nat. Biotechnol.">
        <title>Complete sequence and comparative genome analysis of the dairy bacterium Streptococcus thermophilus.</title>
        <authorList>
            <person name="Bolotin A."/>
            <person name="Quinquis B."/>
            <person name="Renault P."/>
            <person name="Sorokin A."/>
            <person name="Ehrlich S.D."/>
            <person name="Kulakauskas S."/>
            <person name="Lapidus A."/>
            <person name="Goltsman E."/>
            <person name="Mazur M."/>
            <person name="Pusch G.D."/>
            <person name="Fonstein M."/>
            <person name="Overbeek R."/>
            <person name="Kyprides N."/>
            <person name="Purnelle B."/>
            <person name="Prozzi D."/>
            <person name="Ngui K."/>
            <person name="Masuy D."/>
            <person name="Hancy F."/>
            <person name="Burteau S."/>
            <person name="Boutry M."/>
            <person name="Delcour J."/>
            <person name="Goffeau A."/>
            <person name="Hols P."/>
        </authorList>
    </citation>
    <scope>NUCLEOTIDE SEQUENCE [LARGE SCALE GENOMIC DNA]</scope>
    <source>
        <strain>CNRZ 1066</strain>
    </source>
</reference>
<proteinExistence type="inferred from homology"/>
<sequence>MSRKNRAPKREVLADPLYNSKIVTRLINRVMLDGKRGTAATIVYDAFEQIKEATGNDALEVFETAMDNIMPVLEVRARRVGGSNYQVPVEVRPERRITLGLRWLVNASRARGEHTMKERLAKEIMDAANNTGAAVKKREDTHKMAEANRAFAHFRW</sequence>
<accession>Q5LY20</accession>
<comment type="function">
    <text evidence="1">One of the primary rRNA binding proteins, it binds directly to 16S rRNA where it nucleates assembly of the head domain of the 30S subunit. Is located at the subunit interface close to the decoding center, probably blocks exit of the E-site tRNA.</text>
</comment>
<comment type="subunit">
    <text evidence="1">Part of the 30S ribosomal subunit. Contacts proteins S9 and S11.</text>
</comment>
<comment type="similarity">
    <text evidence="1">Belongs to the universal ribosomal protein uS7 family.</text>
</comment>
<name>RS7_STRT1</name>
<organism>
    <name type="scientific">Streptococcus thermophilus (strain CNRZ 1066)</name>
    <dbReference type="NCBI Taxonomy" id="299768"/>
    <lineage>
        <taxon>Bacteria</taxon>
        <taxon>Bacillati</taxon>
        <taxon>Bacillota</taxon>
        <taxon>Bacilli</taxon>
        <taxon>Lactobacillales</taxon>
        <taxon>Streptococcaceae</taxon>
        <taxon>Streptococcus</taxon>
    </lineage>
</organism>
<keyword id="KW-0687">Ribonucleoprotein</keyword>
<keyword id="KW-0689">Ribosomal protein</keyword>
<keyword id="KW-0694">RNA-binding</keyword>
<keyword id="KW-0699">rRNA-binding</keyword>
<keyword id="KW-0820">tRNA-binding</keyword>
<feature type="chain" id="PRO_0000226535" description="Small ribosomal subunit protein uS7">
    <location>
        <begin position="1"/>
        <end position="156"/>
    </location>
</feature>